<accession>Q54KN2</accession>
<proteinExistence type="inferred from homology"/>
<sequence length="331" mass="39320">MDEFQSKAFEVGEEIEPDDNEPLTGEEYLQRVKWHSNRCPSVVVADIDYSKIKVTIPSNSYFTLPPSITKCKKELLPTPTWEKEFLNDFSEFRQKLQYIKSNRPSNNNNNNNNNNNNNNNNNNNNNLIPQLPHINDKRYWYIFCFGSNGNNNNNNNDIKMKDFNDNQEDDDDDENNEDYEYNENKEEEEEEEEEEEEEEEVEEEEEEEEEEEEVVDYSTKKPTLGNKPTMDILCRLDHVLTVALVNYHIEWLEKREFTQERSYWLYMLLSLLEKPIDPDTCSNLRSCIRRLSVFRSKITNLNDPNLPSINILFTIIAKYFDQLEPSDILYL</sequence>
<comment type="function">
    <text evidence="2">The SMN complex catalyzes the assembly of small nuclear ribonucleoproteins (snRNPs), the building blocks of the spliceosome, and thereby plays an important role in the splicing of cellular pre-mRNAs (By similarity). Most spliceosomal snRNPs contain a common set of Sm proteins SNRPB, SNRPD1, SNRPD2, SNRPD3, SNRPE, SNRPF and SNRPG that assemble in a heptameric protein ring on the Sm site of the small nuclear RNA to form the core snRNP (Sm core) (By similarity). In the cytosol, the Sm proteins SNRPD1, SNRPD2, SNRPE, SNRPF and SNRPG (5Sm) are trapped in an inactive 6S pICln-Sm complex by the chaperone CLNS1A that controls the assembly of the core snRNP (By similarity). To assemble core snRNPs, the SMN complex accepts the trapped 5Sm proteins from CLNS1A (By similarity). Binding of snRNA inside 5Sm ultimately triggers eviction of the SMN complex, thereby allowing binding of SNRPD3 and SNRPB to complete assembly of the core snRNP (By similarity). Within the SMN complex, GEMIN2 constrains the conformation of 5Sm, thereby promoting 5Sm binding to snRNA containing the snRNP code (a nonameric Sm site and a 3'-adjacent stem-loop), thus preventing progression of assembly until a cognate substrate is bound (By similarity).</text>
</comment>
<comment type="function">
    <text evidence="1">May play an essential role in spliceosomal snRNP assembly in the cytoplasm and may be required for pre-mRNA splicing in the nucleus.</text>
</comment>
<comment type="subcellular location">
    <subcellularLocation>
        <location evidence="5">Nucleus</location>
        <location evidence="5">Gem</location>
    </subcellularLocation>
    <subcellularLocation>
        <location evidence="5">Cytoplasm</location>
    </subcellularLocation>
</comment>
<comment type="similarity">
    <text evidence="5">Belongs to the gemin-2 family.</text>
</comment>
<protein>
    <recommendedName>
        <fullName>Gem-associated protein 2</fullName>
        <shortName>Gemin-2</shortName>
    </recommendedName>
    <alternativeName>
        <fullName>Component of gems protein 2</fullName>
    </alternativeName>
</protein>
<keyword id="KW-0175">Coiled coil</keyword>
<keyword id="KW-0963">Cytoplasm</keyword>
<keyword id="KW-0507">mRNA processing</keyword>
<keyword id="KW-0508">mRNA splicing</keyword>
<keyword id="KW-0539">Nucleus</keyword>
<keyword id="KW-1185">Reference proteome</keyword>
<keyword id="KW-0747">Spliceosome</keyword>
<organism>
    <name type="scientific">Dictyostelium discoideum</name>
    <name type="common">Social amoeba</name>
    <dbReference type="NCBI Taxonomy" id="44689"/>
    <lineage>
        <taxon>Eukaryota</taxon>
        <taxon>Amoebozoa</taxon>
        <taxon>Evosea</taxon>
        <taxon>Eumycetozoa</taxon>
        <taxon>Dictyostelia</taxon>
        <taxon>Dictyosteliales</taxon>
        <taxon>Dictyosteliaceae</taxon>
        <taxon>Dictyostelium</taxon>
    </lineage>
</organism>
<gene>
    <name type="primary">gemin2</name>
    <name type="ORF">DDB_G0287253</name>
</gene>
<reference key="1">
    <citation type="journal article" date="2005" name="Nature">
        <title>The genome of the social amoeba Dictyostelium discoideum.</title>
        <authorList>
            <person name="Eichinger L."/>
            <person name="Pachebat J.A."/>
            <person name="Gloeckner G."/>
            <person name="Rajandream M.A."/>
            <person name="Sucgang R."/>
            <person name="Berriman M."/>
            <person name="Song J."/>
            <person name="Olsen R."/>
            <person name="Szafranski K."/>
            <person name="Xu Q."/>
            <person name="Tunggal B."/>
            <person name="Kummerfeld S."/>
            <person name="Madera M."/>
            <person name="Konfortov B.A."/>
            <person name="Rivero F."/>
            <person name="Bankier A.T."/>
            <person name="Lehmann R."/>
            <person name="Hamlin N."/>
            <person name="Davies R."/>
            <person name="Gaudet P."/>
            <person name="Fey P."/>
            <person name="Pilcher K."/>
            <person name="Chen G."/>
            <person name="Saunders D."/>
            <person name="Sodergren E.J."/>
            <person name="Davis P."/>
            <person name="Kerhornou A."/>
            <person name="Nie X."/>
            <person name="Hall N."/>
            <person name="Anjard C."/>
            <person name="Hemphill L."/>
            <person name="Bason N."/>
            <person name="Farbrother P."/>
            <person name="Desany B."/>
            <person name="Just E."/>
            <person name="Morio T."/>
            <person name="Rost R."/>
            <person name="Churcher C.M."/>
            <person name="Cooper J."/>
            <person name="Haydock S."/>
            <person name="van Driessche N."/>
            <person name="Cronin A."/>
            <person name="Goodhead I."/>
            <person name="Muzny D.M."/>
            <person name="Mourier T."/>
            <person name="Pain A."/>
            <person name="Lu M."/>
            <person name="Harper D."/>
            <person name="Lindsay R."/>
            <person name="Hauser H."/>
            <person name="James K.D."/>
            <person name="Quiles M."/>
            <person name="Madan Babu M."/>
            <person name="Saito T."/>
            <person name="Buchrieser C."/>
            <person name="Wardroper A."/>
            <person name="Felder M."/>
            <person name="Thangavelu M."/>
            <person name="Johnson D."/>
            <person name="Knights A."/>
            <person name="Loulseged H."/>
            <person name="Mungall K.L."/>
            <person name="Oliver K."/>
            <person name="Price C."/>
            <person name="Quail M.A."/>
            <person name="Urushihara H."/>
            <person name="Hernandez J."/>
            <person name="Rabbinowitsch E."/>
            <person name="Steffen D."/>
            <person name="Sanders M."/>
            <person name="Ma J."/>
            <person name="Kohara Y."/>
            <person name="Sharp S."/>
            <person name="Simmonds M.N."/>
            <person name="Spiegler S."/>
            <person name="Tivey A."/>
            <person name="Sugano S."/>
            <person name="White B."/>
            <person name="Walker D."/>
            <person name="Woodward J.R."/>
            <person name="Winckler T."/>
            <person name="Tanaka Y."/>
            <person name="Shaulsky G."/>
            <person name="Schleicher M."/>
            <person name="Weinstock G.M."/>
            <person name="Rosenthal A."/>
            <person name="Cox E.C."/>
            <person name="Chisholm R.L."/>
            <person name="Gibbs R.A."/>
            <person name="Loomis W.F."/>
            <person name="Platzer M."/>
            <person name="Kay R.R."/>
            <person name="Williams J.G."/>
            <person name="Dear P.H."/>
            <person name="Noegel A.A."/>
            <person name="Barrell B.G."/>
            <person name="Kuspa A."/>
        </authorList>
    </citation>
    <scope>NUCLEOTIDE SEQUENCE [LARGE SCALE GENOMIC DNA]</scope>
    <source>
        <strain>AX4</strain>
    </source>
</reference>
<feature type="chain" id="PRO_0000371341" description="Gem-associated protein 2">
    <location>
        <begin position="1"/>
        <end position="331"/>
    </location>
</feature>
<feature type="region of interest" description="Disordered" evidence="4">
    <location>
        <begin position="1"/>
        <end position="23"/>
    </location>
</feature>
<feature type="region of interest" description="Disordered" evidence="4">
    <location>
        <begin position="101"/>
        <end position="130"/>
    </location>
</feature>
<feature type="region of interest" description="Disordered" evidence="4">
    <location>
        <begin position="151"/>
        <end position="222"/>
    </location>
</feature>
<feature type="coiled-coil region" evidence="3">
    <location>
        <begin position="173"/>
        <end position="224"/>
    </location>
</feature>
<feature type="compositionally biased region" description="Acidic residues" evidence="4">
    <location>
        <begin position="11"/>
        <end position="21"/>
    </location>
</feature>
<feature type="compositionally biased region" description="Low complexity" evidence="4">
    <location>
        <begin position="106"/>
        <end position="126"/>
    </location>
</feature>
<feature type="compositionally biased region" description="Acidic residues" evidence="4">
    <location>
        <begin position="165"/>
        <end position="215"/>
    </location>
</feature>
<name>GEMI2_DICDI</name>
<evidence type="ECO:0000250" key="1"/>
<evidence type="ECO:0000250" key="2">
    <source>
        <dbReference type="UniProtKB" id="O14893"/>
    </source>
</evidence>
<evidence type="ECO:0000255" key="3"/>
<evidence type="ECO:0000256" key="4">
    <source>
        <dbReference type="SAM" id="MobiDB-lite"/>
    </source>
</evidence>
<evidence type="ECO:0000305" key="5"/>
<dbReference type="EMBL" id="AAFI02000099">
    <property type="protein sequence ID" value="EAL63828.1"/>
    <property type="molecule type" value="Genomic_DNA"/>
</dbReference>
<dbReference type="RefSeq" id="XP_637325.1">
    <property type="nucleotide sequence ID" value="XM_632233.1"/>
</dbReference>
<dbReference type="SMR" id="Q54KN2"/>
<dbReference type="FunCoup" id="Q54KN2">
    <property type="interactions" value="77"/>
</dbReference>
<dbReference type="STRING" id="44689.Q54KN2"/>
<dbReference type="PaxDb" id="44689-DDB0302536"/>
<dbReference type="EnsemblProtists" id="EAL63828">
    <property type="protein sequence ID" value="EAL63828"/>
    <property type="gene ID" value="DDB_G0287253"/>
</dbReference>
<dbReference type="GeneID" id="8626022"/>
<dbReference type="KEGG" id="ddi:DDB_G0287253"/>
<dbReference type="dictyBase" id="DDB_G0287253">
    <property type="gene designation" value="gemin2"/>
</dbReference>
<dbReference type="VEuPathDB" id="AmoebaDB:DDB_G0287253"/>
<dbReference type="eggNOG" id="ENOG502R0G7">
    <property type="taxonomic scope" value="Eukaryota"/>
</dbReference>
<dbReference type="HOGENOM" id="CLU_053222_0_0_1"/>
<dbReference type="InParanoid" id="Q54KN2"/>
<dbReference type="OMA" id="NYHIEWL"/>
<dbReference type="PhylomeDB" id="Q54KN2"/>
<dbReference type="PRO" id="PR:Q54KN2"/>
<dbReference type="Proteomes" id="UP000002195">
    <property type="component" value="Chromosome 5"/>
</dbReference>
<dbReference type="GO" id="GO:0097504">
    <property type="term" value="C:Gemini of Cajal bodies"/>
    <property type="evidence" value="ECO:0007669"/>
    <property type="project" value="UniProtKB-SubCell"/>
</dbReference>
<dbReference type="GO" id="GO:0005634">
    <property type="term" value="C:nucleus"/>
    <property type="evidence" value="ECO:0000318"/>
    <property type="project" value="GO_Central"/>
</dbReference>
<dbReference type="GO" id="GO:0032797">
    <property type="term" value="C:SMN complex"/>
    <property type="evidence" value="ECO:0000318"/>
    <property type="project" value="GO_Central"/>
</dbReference>
<dbReference type="GO" id="GO:0005681">
    <property type="term" value="C:spliceosomal complex"/>
    <property type="evidence" value="ECO:0007669"/>
    <property type="project" value="UniProtKB-KW"/>
</dbReference>
<dbReference type="GO" id="GO:0000387">
    <property type="term" value="P:spliceosomal snRNP assembly"/>
    <property type="evidence" value="ECO:0000250"/>
    <property type="project" value="UniProtKB"/>
</dbReference>
<dbReference type="FunFam" id="1.20.58.1070:FF:000016">
    <property type="entry name" value="Gem-associated protein 2"/>
    <property type="match status" value="1"/>
</dbReference>
<dbReference type="Gene3D" id="1.20.58.1070">
    <property type="match status" value="1"/>
</dbReference>
<dbReference type="InterPro" id="IPR035426">
    <property type="entry name" value="Gemin2/Brr1"/>
</dbReference>
<dbReference type="PANTHER" id="PTHR12794:SF0">
    <property type="entry name" value="GEM-ASSOCIATED PROTEIN 2"/>
    <property type="match status" value="1"/>
</dbReference>
<dbReference type="PANTHER" id="PTHR12794">
    <property type="entry name" value="GEMIN2"/>
    <property type="match status" value="1"/>
</dbReference>
<dbReference type="Pfam" id="PF04938">
    <property type="entry name" value="SIP1"/>
    <property type="match status" value="1"/>
</dbReference>